<sequence length="599" mass="67352">MSGFHNVGNINMMAQQQMQQNRIKISVRNWQNATMNDLINFISRNARVAVYDAHVEGPLVIGYVNSKAEAESLMKWNGVRFAGSNLKFELLDNNGASAGTSDTISFLRGVLLKRYDPQTKLLNLGALHSDPELIQKGVFSSISTQSKMFPAMMKLASTEKSLIVESVNLADNQLKDISAISTLAQTFPNLKNLCLANNQIFRFRSLEVWKNKFKDLRELLMTNNPITTDKLYRTEMLRLFPKLVVLDNVIVRDEQKLQTVYSLPMKIQQFFFENDALGQSSTDFATNFLNLWDNNREQLLNLYSPQSQFSVSVDSTIPPSTVTDSDQTPAFGYYMSSSRNISKVSSEKSIQQRLSIGQESINSIFKTLPKTKHHLQEQPNEYSMETISYPQINGFVITLHGFFEETGKPELESNKKTGKNNYQKNRRYNHGYNSTSNNKLSKKSFDRTWVIVPMNNSVIIASDLLTVRAYSTGAWKTASIAIAQPPQQQASVLPQVASMNPNITTPPQPQPSVVPGGMSIPGAPQGAMVMAPTLQLPPDVQSRLNPVQLELLNKLHLETKLNAEYTFMLAEQSNWNYEVAIKGFQSSMNGIPREAFVQF</sequence>
<proteinExistence type="evidence at protein level"/>
<comment type="function">
    <text evidence="3 8">Involved in the export of mRNA from the nucleus to the cytoplasm.</text>
</comment>
<comment type="subunit">
    <text evidence="6 8">Interacts with nucleoporin complex NUP84 and MTR2. Interacts with MIP6.</text>
</comment>
<comment type="interaction">
    <interactant intactId="EBI-11642">
        <id>Q99257</id>
    </interactant>
    <interactant intactId="EBI-8526">
        <id>P17629</id>
        <label>HPR1</label>
    </interactant>
    <organismsDiffer>false</organismsDiffer>
    <experiments>4</experiments>
</comment>
<comment type="interaction">
    <interactant intactId="EBI-11642">
        <id>Q99257</id>
    </interactant>
    <interactant intactId="EBI-11585">
        <id>P34232</id>
        <label>MTR2</label>
    </interactant>
    <organismsDiffer>false</organismsDiffer>
    <experiments>3</experiments>
</comment>
<comment type="interaction">
    <interactant intactId="EBI-11642">
        <id>Q99257</id>
    </interactant>
    <interactant intactId="EBI-11703">
        <id>Q02630</id>
        <label>NUP116</label>
    </interactant>
    <organismsDiffer>false</organismsDiffer>
    <experiments>5</experiments>
</comment>
<comment type="interaction">
    <interactant intactId="EBI-11642">
        <id>Q99257</id>
    </interactant>
    <interactant intactId="EBI-29516">
        <id>Q12159</id>
        <label>YRA1</label>
    </interactant>
    <organismsDiffer>false</organismsDiffer>
    <experiments>2</experiments>
</comment>
<comment type="subcellular location">
    <subcellularLocation>
        <location>Nucleus</location>
    </subcellularLocation>
    <subcellularLocation>
        <location>Cytoplasm</location>
    </subcellularLocation>
    <text>Localizes at both the nuclear and cytoplasmic site of the pores. Shuttles between the nucleus and the cytoplasm.</text>
</comment>
<comment type="domain">
    <text evidence="1">The leucine-rich repeats and the NTF2-domain are essential for the export of mRNA from the nucleus.</text>
</comment>
<comment type="domain">
    <text>The NTF2 domain heterodimerizes with MTR2. The formation of this heterodimer is essential for mRNA export and binds to all of the nucleoporin-FG-repeats.</text>
</comment>
<comment type="domain">
    <text>The RNA-binding domain is conserved in most NXF proteins but may be absent in yeasts.</text>
</comment>
<comment type="miscellaneous">
    <text evidence="7">Present with 2830 molecules/cell in log phase SD medium.</text>
</comment>
<comment type="similarity">
    <text evidence="9">Belongs to the NXF family.</text>
</comment>
<organism>
    <name type="scientific">Saccharomyces cerevisiae (strain ATCC 204508 / S288c)</name>
    <name type="common">Baker's yeast</name>
    <dbReference type="NCBI Taxonomy" id="559292"/>
    <lineage>
        <taxon>Eukaryota</taxon>
        <taxon>Fungi</taxon>
        <taxon>Dikarya</taxon>
        <taxon>Ascomycota</taxon>
        <taxon>Saccharomycotina</taxon>
        <taxon>Saccharomycetes</taxon>
        <taxon>Saccharomycetales</taxon>
        <taxon>Saccharomycetaceae</taxon>
        <taxon>Saccharomyces</taxon>
    </lineage>
</organism>
<dbReference type="EMBL" id="X96770">
    <property type="protein sequence ID" value="CAA65552.1"/>
    <property type="molecule type" value="Genomic_DNA"/>
</dbReference>
<dbReference type="EMBL" id="Z73525">
    <property type="protein sequence ID" value="CAA97875.1"/>
    <property type="molecule type" value="Genomic_DNA"/>
</dbReference>
<dbReference type="EMBL" id="BK006949">
    <property type="protein sequence ID" value="DAA11265.1"/>
    <property type="molecule type" value="Genomic_DNA"/>
</dbReference>
<dbReference type="PIR" id="S65180">
    <property type="entry name" value="S65180"/>
</dbReference>
<dbReference type="RefSeq" id="NP_015156.1">
    <property type="nucleotide sequence ID" value="NM_001183983.1"/>
</dbReference>
<dbReference type="PDB" id="1OF5">
    <property type="method" value="X-ray"/>
    <property type="resolution" value="2.80 A"/>
    <property type="chains" value="A=268-484"/>
</dbReference>
<dbReference type="PDB" id="2JP7">
    <property type="method" value="NMR"/>
    <property type="chains" value="A=543-599"/>
</dbReference>
<dbReference type="PDB" id="2KHH">
    <property type="method" value="NMR"/>
    <property type="chains" value="A=543-599"/>
</dbReference>
<dbReference type="PDB" id="4WWU">
    <property type="method" value="X-ray"/>
    <property type="resolution" value="3.30 A"/>
    <property type="chains" value="A/B/D/E/G/H/J/K=1-487"/>
</dbReference>
<dbReference type="PDB" id="6EXZ">
    <property type="method" value="X-ray"/>
    <property type="resolution" value="1.30 A"/>
    <property type="chains" value="A=528-599"/>
</dbReference>
<dbReference type="PDB" id="8HBN">
    <property type="method" value="EM"/>
    <property type="resolution" value="3.81 A"/>
    <property type="chains" value="A=1-599"/>
</dbReference>
<dbReference type="PDB" id="8HFR">
    <property type="method" value="EM"/>
    <property type="resolution" value="2.64 A"/>
    <property type="chains" value="AN/CW/EX=1-599"/>
</dbReference>
<dbReference type="PDBsum" id="1OF5"/>
<dbReference type="PDBsum" id="2JP7"/>
<dbReference type="PDBsum" id="2KHH"/>
<dbReference type="PDBsum" id="4WWU"/>
<dbReference type="PDBsum" id="6EXZ"/>
<dbReference type="PDBsum" id="8HBN"/>
<dbReference type="PDBsum" id="8HFR"/>
<dbReference type="EMDB" id="EMD-34638"/>
<dbReference type="EMDB" id="EMD-34640"/>
<dbReference type="EMDB" id="EMD-34725"/>
<dbReference type="EMDB" id="EMD-35767"/>
<dbReference type="SMR" id="Q99257"/>
<dbReference type="BioGRID" id="36014">
    <property type="interactions" value="389"/>
</dbReference>
<dbReference type="ComplexPortal" id="CPX-1142">
    <property type="entry name" value="MEX67-MTR2 mRNA nuclear export factor complex"/>
</dbReference>
<dbReference type="DIP" id="DIP-3984N"/>
<dbReference type="FunCoup" id="Q99257">
    <property type="interactions" value="612"/>
</dbReference>
<dbReference type="IntAct" id="Q99257">
    <property type="interactions" value="34"/>
</dbReference>
<dbReference type="MINT" id="Q99257"/>
<dbReference type="STRING" id="4932.YPL169C"/>
<dbReference type="TCDB" id="1.I.1.1.1">
    <property type="family name" value="the nuclear pore complex (npc) family"/>
</dbReference>
<dbReference type="TCDB" id="3.A.22.1.1">
    <property type="family name" value="the transcription-coupled trex/tap nuclear mrna export complex (trex) family"/>
</dbReference>
<dbReference type="iPTMnet" id="Q99257"/>
<dbReference type="PaxDb" id="4932-YPL169C"/>
<dbReference type="PeptideAtlas" id="Q99257"/>
<dbReference type="TopDownProteomics" id="Q99257"/>
<dbReference type="EnsemblFungi" id="YPL169C_mRNA">
    <property type="protein sequence ID" value="YPL169C"/>
    <property type="gene ID" value="YPL169C"/>
</dbReference>
<dbReference type="GeneID" id="855934"/>
<dbReference type="KEGG" id="sce:YPL169C"/>
<dbReference type="AGR" id="SGD:S000006090"/>
<dbReference type="SGD" id="S000006090">
    <property type="gene designation" value="MEX67"/>
</dbReference>
<dbReference type="VEuPathDB" id="FungiDB:YPL169C"/>
<dbReference type="eggNOG" id="KOG3763">
    <property type="taxonomic scope" value="Eukaryota"/>
</dbReference>
<dbReference type="GeneTree" id="ENSGT00390000007539"/>
<dbReference type="HOGENOM" id="CLU_024991_1_1_1"/>
<dbReference type="InParanoid" id="Q99257"/>
<dbReference type="OMA" id="YGGHEAW"/>
<dbReference type="OrthoDB" id="25872at2759"/>
<dbReference type="BioCyc" id="YEAST:G3O-34065-MONOMER"/>
<dbReference type="Reactome" id="R-SCE-159236">
    <property type="pathway name" value="Transport of Mature mRNA derived from an Intron-Containing Transcript"/>
</dbReference>
<dbReference type="BioGRID-ORCS" id="855934">
    <property type="hits" value="2 hits in 10 CRISPR screens"/>
</dbReference>
<dbReference type="EvolutionaryTrace" id="Q99257"/>
<dbReference type="PRO" id="PR:Q99257"/>
<dbReference type="Proteomes" id="UP000002311">
    <property type="component" value="Chromosome XVI"/>
</dbReference>
<dbReference type="RNAct" id="Q99257">
    <property type="molecule type" value="protein"/>
</dbReference>
<dbReference type="GO" id="GO:0005737">
    <property type="term" value="C:cytoplasm"/>
    <property type="evidence" value="ECO:0000314"/>
    <property type="project" value="SGD"/>
</dbReference>
<dbReference type="GO" id="GO:0005643">
    <property type="term" value="C:nuclear pore"/>
    <property type="evidence" value="ECO:0000314"/>
    <property type="project" value="SGD"/>
</dbReference>
<dbReference type="GO" id="GO:0042272">
    <property type="term" value="C:nuclear RNA export factor complex"/>
    <property type="evidence" value="ECO:0000353"/>
    <property type="project" value="ComplexPortal"/>
</dbReference>
<dbReference type="GO" id="GO:0005634">
    <property type="term" value="C:nucleus"/>
    <property type="evidence" value="ECO:0000314"/>
    <property type="project" value="SGD"/>
</dbReference>
<dbReference type="GO" id="GO:0003729">
    <property type="term" value="F:mRNA binding"/>
    <property type="evidence" value="ECO:0007005"/>
    <property type="project" value="SGD"/>
</dbReference>
<dbReference type="GO" id="GO:0015288">
    <property type="term" value="F:porin activity"/>
    <property type="evidence" value="ECO:0000314"/>
    <property type="project" value="SGD"/>
</dbReference>
<dbReference type="GO" id="GO:0003723">
    <property type="term" value="F:RNA binding"/>
    <property type="evidence" value="ECO:0000314"/>
    <property type="project" value="SGD"/>
</dbReference>
<dbReference type="GO" id="GO:0000049">
    <property type="term" value="F:tRNA binding"/>
    <property type="evidence" value="ECO:0000314"/>
    <property type="project" value="SGD"/>
</dbReference>
<dbReference type="GO" id="GO:0030619">
    <property type="term" value="F:U1 snRNA binding"/>
    <property type="evidence" value="ECO:0000314"/>
    <property type="project" value="SGD"/>
</dbReference>
<dbReference type="GO" id="GO:0030620">
    <property type="term" value="F:U2 snRNA binding"/>
    <property type="evidence" value="ECO:0000314"/>
    <property type="project" value="SGD"/>
</dbReference>
<dbReference type="GO" id="GO:0030621">
    <property type="term" value="F:U4 snRNA binding"/>
    <property type="evidence" value="ECO:0000314"/>
    <property type="project" value="SGD"/>
</dbReference>
<dbReference type="GO" id="GO:0030623">
    <property type="term" value="F:U5 snRNA binding"/>
    <property type="evidence" value="ECO:0000314"/>
    <property type="project" value="SGD"/>
</dbReference>
<dbReference type="GO" id="GO:0017070">
    <property type="term" value="F:U6 snRNA binding"/>
    <property type="evidence" value="ECO:0000314"/>
    <property type="project" value="SGD"/>
</dbReference>
<dbReference type="GO" id="GO:0006406">
    <property type="term" value="P:mRNA export from nucleus"/>
    <property type="evidence" value="ECO:0000315"/>
    <property type="project" value="SGD"/>
</dbReference>
<dbReference type="GO" id="GO:0016973">
    <property type="term" value="P:poly(A)+ mRNA export from nucleus"/>
    <property type="evidence" value="ECO:0000315"/>
    <property type="project" value="SGD"/>
</dbReference>
<dbReference type="GO" id="GO:0000055">
    <property type="term" value="P:ribosomal large subunit export from nucleus"/>
    <property type="evidence" value="ECO:0000315"/>
    <property type="project" value="SGD"/>
</dbReference>
<dbReference type="GO" id="GO:0000056">
    <property type="term" value="P:ribosomal small subunit export from nucleus"/>
    <property type="evidence" value="ECO:0000314"/>
    <property type="project" value="ComplexPortal"/>
</dbReference>
<dbReference type="GO" id="GO:0006409">
    <property type="term" value="P:tRNA export from nucleus"/>
    <property type="evidence" value="ECO:0000315"/>
    <property type="project" value="SGD"/>
</dbReference>
<dbReference type="GO" id="GO:0008033">
    <property type="term" value="P:tRNA processing"/>
    <property type="evidence" value="ECO:0000315"/>
    <property type="project" value="SGD"/>
</dbReference>
<dbReference type="GO" id="GO:0071528">
    <property type="term" value="P:tRNA re-export from nucleus"/>
    <property type="evidence" value="ECO:0000315"/>
    <property type="project" value="SGD"/>
</dbReference>
<dbReference type="CDD" id="cd14342">
    <property type="entry name" value="UBA_TAP-C"/>
    <property type="match status" value="1"/>
</dbReference>
<dbReference type="FunFam" id="3.80.10.10:FF:000296">
    <property type="entry name" value="mRNA export factor MEX67"/>
    <property type="match status" value="1"/>
</dbReference>
<dbReference type="FunFam" id="1.10.8.10:FF:000018">
    <property type="entry name" value="Nuclear RNA export factor 1"/>
    <property type="match status" value="1"/>
</dbReference>
<dbReference type="Gene3D" id="3.10.450.50">
    <property type="match status" value="1"/>
</dbReference>
<dbReference type="Gene3D" id="1.10.8.10">
    <property type="entry name" value="DNA helicase RuvA subunit, C-terminal domain"/>
    <property type="match status" value="1"/>
</dbReference>
<dbReference type="Gene3D" id="3.80.10.10">
    <property type="entry name" value="Ribonuclease Inhibitor"/>
    <property type="match status" value="1"/>
</dbReference>
<dbReference type="InterPro" id="IPR001611">
    <property type="entry name" value="Leu-rich_rpt"/>
</dbReference>
<dbReference type="InterPro" id="IPR032675">
    <property type="entry name" value="LRR_dom_sf"/>
</dbReference>
<dbReference type="InterPro" id="IPR040736">
    <property type="entry name" value="Mex67_RRM"/>
</dbReference>
<dbReference type="InterPro" id="IPR032710">
    <property type="entry name" value="NTF2-like_dom_sf"/>
</dbReference>
<dbReference type="InterPro" id="IPR002075">
    <property type="entry name" value="NTF2_dom"/>
</dbReference>
<dbReference type="InterPro" id="IPR018222">
    <property type="entry name" value="Nuclear_transport_factor_2_euk"/>
</dbReference>
<dbReference type="InterPro" id="IPR030217">
    <property type="entry name" value="NXF_fam"/>
</dbReference>
<dbReference type="InterPro" id="IPR005637">
    <property type="entry name" value="TAP_C_dom"/>
</dbReference>
<dbReference type="InterPro" id="IPR009060">
    <property type="entry name" value="UBA-like_sf"/>
</dbReference>
<dbReference type="PANTHER" id="PTHR10662">
    <property type="entry name" value="NUCLEAR RNA EXPORT FACTOR"/>
    <property type="match status" value="1"/>
</dbReference>
<dbReference type="PANTHER" id="PTHR10662:SF22">
    <property type="entry name" value="NUCLEAR RNA EXPORT FACTOR 1"/>
    <property type="match status" value="1"/>
</dbReference>
<dbReference type="Pfam" id="PF24048">
    <property type="entry name" value="LRR_NXF1-5"/>
    <property type="match status" value="1"/>
</dbReference>
<dbReference type="Pfam" id="PF22602">
    <property type="entry name" value="NXF_NTF2"/>
    <property type="match status" value="1"/>
</dbReference>
<dbReference type="Pfam" id="PF18444">
    <property type="entry name" value="RRM_9"/>
    <property type="match status" value="1"/>
</dbReference>
<dbReference type="Pfam" id="PF03943">
    <property type="entry name" value="TAP_C"/>
    <property type="match status" value="1"/>
</dbReference>
<dbReference type="SMART" id="SM00804">
    <property type="entry name" value="TAP_C"/>
    <property type="match status" value="1"/>
</dbReference>
<dbReference type="SUPFAM" id="SSF52058">
    <property type="entry name" value="L domain-like"/>
    <property type="match status" value="1"/>
</dbReference>
<dbReference type="SUPFAM" id="SSF54427">
    <property type="entry name" value="NTF2-like"/>
    <property type="match status" value="1"/>
</dbReference>
<dbReference type="SUPFAM" id="SSF46934">
    <property type="entry name" value="UBA-like"/>
    <property type="match status" value="1"/>
</dbReference>
<dbReference type="PROSITE" id="PS51450">
    <property type="entry name" value="LRR"/>
    <property type="match status" value="3"/>
</dbReference>
<dbReference type="PROSITE" id="PS50177">
    <property type="entry name" value="NTF2_DOMAIN"/>
    <property type="match status" value="1"/>
</dbReference>
<dbReference type="PROSITE" id="PS51281">
    <property type="entry name" value="TAP_C"/>
    <property type="match status" value="1"/>
</dbReference>
<gene>
    <name type="primary">MEX67</name>
    <name type="ordered locus">YPL169C</name>
    <name type="ORF">P2520</name>
</gene>
<evidence type="ECO:0000250" key="1"/>
<evidence type="ECO:0000255" key="2">
    <source>
        <dbReference type="PROSITE-ProRule" id="PRU00137"/>
    </source>
</evidence>
<evidence type="ECO:0000255" key="3">
    <source>
        <dbReference type="PROSITE-ProRule" id="PRU00611"/>
    </source>
</evidence>
<evidence type="ECO:0000256" key="4">
    <source>
        <dbReference type="SAM" id="MobiDB-lite"/>
    </source>
</evidence>
<evidence type="ECO:0000269" key="5">
    <source>
    </source>
</evidence>
<evidence type="ECO:0000269" key="6">
    <source>
    </source>
</evidence>
<evidence type="ECO:0000269" key="7">
    <source>
    </source>
</evidence>
<evidence type="ECO:0000269" key="8">
    <source>
    </source>
</evidence>
<evidence type="ECO:0000305" key="9"/>
<evidence type="ECO:0007744" key="10">
    <source>
    </source>
</evidence>
<evidence type="ECO:0007829" key="11">
    <source>
        <dbReference type="PDB" id="1OF5"/>
    </source>
</evidence>
<evidence type="ECO:0007829" key="12">
    <source>
        <dbReference type="PDB" id="2JP7"/>
    </source>
</evidence>
<evidence type="ECO:0007829" key="13">
    <source>
        <dbReference type="PDB" id="4WWU"/>
    </source>
</evidence>
<evidence type="ECO:0007829" key="14">
    <source>
        <dbReference type="PDB" id="6EXZ"/>
    </source>
</evidence>
<protein>
    <recommendedName>
        <fullName>mRNA export factor MEX67</fullName>
    </recommendedName>
</protein>
<name>MEX67_YEAST</name>
<accession>Q99257</accession>
<accession>D6W3J9</accession>
<feature type="initiator methionine" description="Removed" evidence="10">
    <location>
        <position position="1"/>
    </location>
</feature>
<feature type="chain" id="PRO_0000220542" description="mRNA export factor MEX67">
    <location>
        <begin position="2"/>
        <end position="599"/>
    </location>
</feature>
<feature type="repeat" description="LRR 1">
    <location>
        <begin position="163"/>
        <end position="184"/>
    </location>
</feature>
<feature type="repeat" description="LRR 2">
    <location>
        <begin position="189"/>
        <end position="210"/>
    </location>
</feature>
<feature type="domain" description="LRRCT">
    <location>
        <begin position="224"/>
        <end position="262"/>
    </location>
</feature>
<feature type="domain" description="NTF2" evidence="2">
    <location>
        <begin position="280"/>
        <end position="467"/>
    </location>
</feature>
<feature type="domain" description="TAP-C" evidence="3">
    <location>
        <begin position="546"/>
        <end position="599"/>
    </location>
</feature>
<feature type="region of interest" description="Disordered" evidence="4">
    <location>
        <begin position="408"/>
        <end position="439"/>
    </location>
</feature>
<feature type="modified residue" description="N-acetylserine" evidence="10">
    <location>
        <position position="2"/>
    </location>
</feature>
<feature type="mutagenesis site" description="Impairs association with the nuclear pores and interaction with MTR2." evidence="5">
    <original>H</original>
    <variation>Y</variation>
    <location>
        <position position="400"/>
    </location>
</feature>
<feature type="strand" evidence="13">
    <location>
        <begin position="24"/>
        <end position="29"/>
    </location>
</feature>
<feature type="helix" evidence="13">
    <location>
        <begin position="35"/>
        <end position="45"/>
    </location>
</feature>
<feature type="strand" evidence="13">
    <location>
        <begin position="51"/>
        <end position="54"/>
    </location>
</feature>
<feature type="strand" evidence="13">
    <location>
        <begin position="59"/>
        <end position="63"/>
    </location>
</feature>
<feature type="helix" evidence="13">
    <location>
        <begin position="67"/>
        <end position="75"/>
    </location>
</feature>
<feature type="strand" evidence="13">
    <location>
        <begin position="82"/>
        <end position="85"/>
    </location>
</feature>
<feature type="strand" evidence="13">
    <location>
        <begin position="87"/>
        <end position="91"/>
    </location>
</feature>
<feature type="helix" evidence="13">
    <location>
        <begin position="102"/>
        <end position="114"/>
    </location>
</feature>
<feature type="turn" evidence="13">
    <location>
        <begin position="117"/>
        <end position="120"/>
    </location>
</feature>
<feature type="strand" evidence="13">
    <location>
        <begin position="121"/>
        <end position="123"/>
    </location>
</feature>
<feature type="helix" evidence="13">
    <location>
        <begin position="127"/>
        <end position="129"/>
    </location>
</feature>
<feature type="helix" evidence="13">
    <location>
        <begin position="131"/>
        <end position="136"/>
    </location>
</feature>
<feature type="strand" evidence="13">
    <location>
        <begin position="140"/>
        <end position="143"/>
    </location>
</feature>
<feature type="helix" evidence="13">
    <location>
        <begin position="148"/>
        <end position="159"/>
    </location>
</feature>
<feature type="strand" evidence="13">
    <location>
        <begin position="165"/>
        <end position="168"/>
    </location>
</feature>
<feature type="helix" evidence="13">
    <location>
        <begin position="177"/>
        <end position="182"/>
    </location>
</feature>
<feature type="helix" evidence="13">
    <location>
        <begin position="183"/>
        <end position="186"/>
    </location>
</feature>
<feature type="strand" evidence="13">
    <location>
        <begin position="192"/>
        <end position="194"/>
    </location>
</feature>
<feature type="helix" evidence="13">
    <location>
        <begin position="205"/>
        <end position="209"/>
    </location>
</feature>
<feature type="strand" evidence="13">
    <location>
        <begin position="218"/>
        <end position="220"/>
    </location>
</feature>
<feature type="helix" evidence="13">
    <location>
        <begin position="225"/>
        <end position="228"/>
    </location>
</feature>
<feature type="helix" evidence="13">
    <location>
        <begin position="232"/>
        <end position="239"/>
    </location>
</feature>
<feature type="helix" evidence="13">
    <location>
        <begin position="254"/>
        <end position="260"/>
    </location>
</feature>
<feature type="strand" evidence="13">
    <location>
        <begin position="269"/>
        <end position="274"/>
    </location>
</feature>
<feature type="helix" evidence="11">
    <location>
        <begin position="279"/>
        <end position="294"/>
    </location>
</feature>
<feature type="helix" evidence="11">
    <location>
        <begin position="296"/>
        <end position="302"/>
    </location>
</feature>
<feature type="strand" evidence="11">
    <location>
        <begin position="303"/>
        <end position="313"/>
    </location>
</feature>
<feature type="turn" evidence="13">
    <location>
        <begin position="332"/>
        <end position="337"/>
    </location>
</feature>
<feature type="turn" evidence="13">
    <location>
        <begin position="341"/>
        <end position="343"/>
    </location>
</feature>
<feature type="helix" evidence="13">
    <location>
        <begin position="347"/>
        <end position="353"/>
    </location>
</feature>
<feature type="helix" evidence="11">
    <location>
        <begin position="357"/>
        <end position="367"/>
    </location>
</feature>
<feature type="strand" evidence="11">
    <location>
        <begin position="371"/>
        <end position="373"/>
    </location>
</feature>
<feature type="turn" evidence="11">
    <location>
        <begin position="375"/>
        <end position="377"/>
    </location>
</feature>
<feature type="helix" evidence="11">
    <location>
        <begin position="379"/>
        <end position="381"/>
    </location>
</feature>
<feature type="strand" evidence="11">
    <location>
        <begin position="383"/>
        <end position="389"/>
    </location>
</feature>
<feature type="helix" evidence="11">
    <location>
        <begin position="390"/>
        <end position="392"/>
    </location>
</feature>
<feature type="strand" evidence="11">
    <location>
        <begin position="394"/>
        <end position="405"/>
    </location>
</feature>
<feature type="strand" evidence="11">
    <location>
        <begin position="441"/>
        <end position="454"/>
    </location>
</feature>
<feature type="strand" evidence="11">
    <location>
        <begin position="457"/>
        <end position="469"/>
    </location>
</feature>
<feature type="helix" evidence="14">
    <location>
        <begin position="532"/>
        <end position="535"/>
    </location>
</feature>
<feature type="helix" evidence="14">
    <location>
        <begin position="538"/>
        <end position="541"/>
    </location>
</feature>
<feature type="helix" evidence="14">
    <location>
        <begin position="546"/>
        <end position="559"/>
    </location>
</feature>
<feature type="helix" evidence="14">
    <location>
        <begin position="563"/>
        <end position="572"/>
    </location>
</feature>
<feature type="turn" evidence="12">
    <location>
        <begin position="573"/>
        <end position="575"/>
    </location>
</feature>
<feature type="helix" evidence="14">
    <location>
        <begin position="577"/>
        <end position="586"/>
    </location>
</feature>
<feature type="helix" evidence="14">
    <location>
        <begin position="588"/>
        <end position="590"/>
    </location>
</feature>
<feature type="helix" evidence="14">
    <location>
        <begin position="593"/>
        <end position="596"/>
    </location>
</feature>
<keyword id="KW-0002">3D-structure</keyword>
<keyword id="KW-0007">Acetylation</keyword>
<keyword id="KW-0963">Cytoplasm</keyword>
<keyword id="KW-0433">Leucine-rich repeat</keyword>
<keyword id="KW-0509">mRNA transport</keyword>
<keyword id="KW-0539">Nucleus</keyword>
<keyword id="KW-1185">Reference proteome</keyword>
<keyword id="KW-0677">Repeat</keyword>
<keyword id="KW-0813">Transport</keyword>
<reference key="1">
    <citation type="journal article" date="1996" name="Yeast">
        <title>The sequence of 55 kb on the left arm of yeast chromosome XVI identifies a small nuclear RNA, a new putative protein kinase and two new putative regulators.</title>
        <authorList>
            <person name="Purnelle B."/>
            <person name="Coster F."/>
            <person name="Goffeau A."/>
        </authorList>
    </citation>
    <scope>NUCLEOTIDE SEQUENCE [GENOMIC DNA]</scope>
    <source>
        <strain>ATCC 204511 / S288c / AB972</strain>
    </source>
</reference>
<reference key="2">
    <citation type="journal article" date="1997" name="Nature">
        <title>The nucleotide sequence of Saccharomyces cerevisiae chromosome XVI.</title>
        <authorList>
            <person name="Bussey H."/>
            <person name="Storms R.K."/>
            <person name="Ahmed A."/>
            <person name="Albermann K."/>
            <person name="Allen E."/>
            <person name="Ansorge W."/>
            <person name="Araujo R."/>
            <person name="Aparicio A."/>
            <person name="Barrell B.G."/>
            <person name="Badcock K."/>
            <person name="Benes V."/>
            <person name="Botstein D."/>
            <person name="Bowman S."/>
            <person name="Brueckner M."/>
            <person name="Carpenter J."/>
            <person name="Cherry J.M."/>
            <person name="Chung E."/>
            <person name="Churcher C.M."/>
            <person name="Coster F."/>
            <person name="Davis K."/>
            <person name="Davis R.W."/>
            <person name="Dietrich F.S."/>
            <person name="Delius H."/>
            <person name="DiPaolo T."/>
            <person name="Dubois E."/>
            <person name="Duesterhoeft A."/>
            <person name="Duncan M."/>
            <person name="Floeth M."/>
            <person name="Fortin N."/>
            <person name="Friesen J.D."/>
            <person name="Fritz C."/>
            <person name="Goffeau A."/>
            <person name="Hall J."/>
            <person name="Hebling U."/>
            <person name="Heumann K."/>
            <person name="Hilbert H."/>
            <person name="Hillier L.W."/>
            <person name="Hunicke-Smith S."/>
            <person name="Hyman R.W."/>
            <person name="Johnston M."/>
            <person name="Kalman S."/>
            <person name="Kleine K."/>
            <person name="Komp C."/>
            <person name="Kurdi O."/>
            <person name="Lashkari D."/>
            <person name="Lew H."/>
            <person name="Lin A."/>
            <person name="Lin D."/>
            <person name="Louis E.J."/>
            <person name="Marathe R."/>
            <person name="Messenguy F."/>
            <person name="Mewes H.-W."/>
            <person name="Mirtipati S."/>
            <person name="Moestl D."/>
            <person name="Mueller-Auer S."/>
            <person name="Namath A."/>
            <person name="Nentwich U."/>
            <person name="Oefner P."/>
            <person name="Pearson D."/>
            <person name="Petel F.X."/>
            <person name="Pohl T.M."/>
            <person name="Purnelle B."/>
            <person name="Rajandream M.A."/>
            <person name="Rechmann S."/>
            <person name="Rieger M."/>
            <person name="Riles L."/>
            <person name="Roberts D."/>
            <person name="Schaefer M."/>
            <person name="Scharfe M."/>
            <person name="Scherens B."/>
            <person name="Schramm S."/>
            <person name="Schroeder M."/>
            <person name="Sdicu A.-M."/>
            <person name="Tettelin H."/>
            <person name="Urrestarazu L.A."/>
            <person name="Ushinsky S."/>
            <person name="Vierendeels F."/>
            <person name="Vissers S."/>
            <person name="Voss H."/>
            <person name="Walsh S.V."/>
            <person name="Wambutt R."/>
            <person name="Wang Y."/>
            <person name="Wedler E."/>
            <person name="Wedler H."/>
            <person name="Winnett E."/>
            <person name="Zhong W.-W."/>
            <person name="Zollner A."/>
            <person name="Vo D.H."/>
            <person name="Hani J."/>
        </authorList>
    </citation>
    <scope>NUCLEOTIDE SEQUENCE [LARGE SCALE GENOMIC DNA]</scope>
    <source>
        <strain>ATCC 204508 / S288c</strain>
    </source>
</reference>
<reference key="3">
    <citation type="journal article" date="2014" name="G3 (Bethesda)">
        <title>The reference genome sequence of Saccharomyces cerevisiae: Then and now.</title>
        <authorList>
            <person name="Engel S.R."/>
            <person name="Dietrich F.S."/>
            <person name="Fisk D.G."/>
            <person name="Binkley G."/>
            <person name="Balakrishnan R."/>
            <person name="Costanzo M.C."/>
            <person name="Dwight S.S."/>
            <person name="Hitz B.C."/>
            <person name="Karra K."/>
            <person name="Nash R.S."/>
            <person name="Weng S."/>
            <person name="Wong E.D."/>
            <person name="Lloyd P."/>
            <person name="Skrzypek M.S."/>
            <person name="Miyasato S.R."/>
            <person name="Simison M."/>
            <person name="Cherry J.M."/>
        </authorList>
    </citation>
    <scope>GENOME REANNOTATION</scope>
    <source>
        <strain>ATCC 204508 / S288c</strain>
    </source>
</reference>
<reference key="4">
    <citation type="journal article" date="1997" name="EMBO J.">
        <title>Mex67p, a novel factor for nuclear mRNA export, binds to both poly(A)+ RNA and nuclear pores.</title>
        <authorList>
            <person name="Segref A."/>
            <person name="Sharma K."/>
            <person name="Doye V."/>
            <person name="Hellwig A."/>
            <person name="Huber J."/>
            <person name="Luehrmann R."/>
            <person name="Hurt E."/>
        </authorList>
    </citation>
    <scope>FUNCTION</scope>
    <scope>INTERACTION WITH MIP6</scope>
</reference>
<reference key="5">
    <citation type="journal article" date="2000" name="J. Cell Biol.">
        <title>Binding of the Mex67p/Mtr2p heterodimer to FXFG, GLFG, and FG repeat nucleoporins is essential for nuclear mRNA export.</title>
        <authorList>
            <person name="Straesser K."/>
            <person name="Bassler J."/>
            <person name="Hurt E.C."/>
        </authorList>
    </citation>
    <scope>CHARACTERIZATION</scope>
    <scope>MUTAGENESIS OF HIS-400</scope>
</reference>
<reference key="6">
    <citation type="journal article" date="2003" name="Nature">
        <title>Global analysis of protein expression in yeast.</title>
        <authorList>
            <person name="Ghaemmaghami S."/>
            <person name="Huh W.-K."/>
            <person name="Bower K."/>
            <person name="Howson R.W."/>
            <person name="Belle A."/>
            <person name="Dephoure N."/>
            <person name="O'Shea E.K."/>
            <person name="Weissman J.S."/>
        </authorList>
    </citation>
    <scope>LEVEL OF PROTEIN EXPRESSION [LARGE SCALE ANALYSIS]</scope>
</reference>
<reference key="7">
    <citation type="journal article" date="2012" name="Proc. Natl. Acad. Sci. U.S.A.">
        <title>N-terminal acetylome analyses and functional insights of the N-terminal acetyltransferase NatB.</title>
        <authorList>
            <person name="Van Damme P."/>
            <person name="Lasa M."/>
            <person name="Polevoda B."/>
            <person name="Gazquez C."/>
            <person name="Elosegui-Artola A."/>
            <person name="Kim D.S."/>
            <person name="De Juan-Pardo E."/>
            <person name="Demeyer K."/>
            <person name="Hole K."/>
            <person name="Larrea E."/>
            <person name="Timmerman E."/>
            <person name="Prieto J."/>
            <person name="Arnesen T."/>
            <person name="Sherman F."/>
            <person name="Gevaert K."/>
            <person name="Aldabe R."/>
        </authorList>
    </citation>
    <scope>ACETYLATION [LARGE SCALE ANALYSIS] AT SER-2</scope>
    <scope>CLEAVAGE OF INITIATOR METHIONINE [LARGE SCALE ANALYSIS]</scope>
    <scope>IDENTIFICATION BY MASS SPECTROMETRY [LARGE SCALE ANALYSIS]</scope>
</reference>
<reference key="8">
    <citation type="journal article" date="2003" name="EMBO Rep.">
        <title>Structural similarity in the absence of sequence homology of the messenger RNA export factors Mtr2 and p15.</title>
        <authorList>
            <person name="Fribourg S."/>
            <person name="Conti E."/>
        </authorList>
    </citation>
    <scope>X-RAY CRYSTALLOGRAPHY (2.8 ANGSTROMS) OF 268-488 IN COMPLEX WITH MTR2</scope>
</reference>